<keyword id="KW-0963">Cytoplasm</keyword>
<keyword id="KW-0521">NADP</keyword>
<keyword id="KW-0560">Oxidoreductase</keyword>
<keyword id="KW-0671">Queuosine biosynthesis</keyword>
<keyword id="KW-1185">Reference proteome</keyword>
<accession>Q1H1G9</accession>
<organism>
    <name type="scientific">Methylobacillus flagellatus (strain ATCC 51484 / DSM 6875 / VKM B-1610 / KT)</name>
    <dbReference type="NCBI Taxonomy" id="265072"/>
    <lineage>
        <taxon>Bacteria</taxon>
        <taxon>Pseudomonadati</taxon>
        <taxon>Pseudomonadota</taxon>
        <taxon>Betaproteobacteria</taxon>
        <taxon>Nitrosomonadales</taxon>
        <taxon>Methylophilaceae</taxon>
        <taxon>Methylobacillus</taxon>
    </lineage>
</organism>
<comment type="function">
    <text evidence="1">Catalyzes the NADPH-dependent reduction of 7-cyano-7-deazaguanine (preQ0) to 7-aminomethyl-7-deazaguanine (preQ1).</text>
</comment>
<comment type="catalytic activity">
    <reaction evidence="1">
        <text>7-aminomethyl-7-carbaguanine + 2 NADP(+) = 7-cyano-7-deazaguanine + 2 NADPH + 3 H(+)</text>
        <dbReference type="Rhea" id="RHEA:13409"/>
        <dbReference type="ChEBI" id="CHEBI:15378"/>
        <dbReference type="ChEBI" id="CHEBI:45075"/>
        <dbReference type="ChEBI" id="CHEBI:57783"/>
        <dbReference type="ChEBI" id="CHEBI:58349"/>
        <dbReference type="ChEBI" id="CHEBI:58703"/>
        <dbReference type="EC" id="1.7.1.13"/>
    </reaction>
</comment>
<comment type="pathway">
    <text evidence="1">tRNA modification; tRNA-queuosine biosynthesis.</text>
</comment>
<comment type="subcellular location">
    <subcellularLocation>
        <location evidence="1">Cytoplasm</location>
    </subcellularLocation>
</comment>
<comment type="similarity">
    <text evidence="1">Belongs to the GTP cyclohydrolase I family. QueF type 1 subfamily.</text>
</comment>
<name>QUEF_METFK</name>
<gene>
    <name evidence="1" type="primary">queF</name>
    <name type="ordered locus">Mfla_1400</name>
</gene>
<dbReference type="EC" id="1.7.1.13" evidence="1"/>
<dbReference type="EMBL" id="CP000284">
    <property type="protein sequence ID" value="ABE49668.1"/>
    <property type="molecule type" value="Genomic_DNA"/>
</dbReference>
<dbReference type="RefSeq" id="WP_011479622.1">
    <property type="nucleotide sequence ID" value="NC_007947.1"/>
</dbReference>
<dbReference type="SMR" id="Q1H1G9"/>
<dbReference type="STRING" id="265072.Mfla_1400"/>
<dbReference type="KEGG" id="mfa:Mfla_1400"/>
<dbReference type="eggNOG" id="COG0780">
    <property type="taxonomic scope" value="Bacteria"/>
</dbReference>
<dbReference type="HOGENOM" id="CLU_102489_1_0_4"/>
<dbReference type="OrthoDB" id="9789995at2"/>
<dbReference type="UniPathway" id="UPA00392"/>
<dbReference type="Proteomes" id="UP000002440">
    <property type="component" value="Chromosome"/>
</dbReference>
<dbReference type="GO" id="GO:0005737">
    <property type="term" value="C:cytoplasm"/>
    <property type="evidence" value="ECO:0007669"/>
    <property type="project" value="UniProtKB-SubCell"/>
</dbReference>
<dbReference type="GO" id="GO:0033739">
    <property type="term" value="F:preQ1 synthase activity"/>
    <property type="evidence" value="ECO:0007669"/>
    <property type="project" value="UniProtKB-UniRule"/>
</dbReference>
<dbReference type="GO" id="GO:0008616">
    <property type="term" value="P:queuosine biosynthetic process"/>
    <property type="evidence" value="ECO:0007669"/>
    <property type="project" value="UniProtKB-UniRule"/>
</dbReference>
<dbReference type="GO" id="GO:0006400">
    <property type="term" value="P:tRNA modification"/>
    <property type="evidence" value="ECO:0007669"/>
    <property type="project" value="UniProtKB-UniRule"/>
</dbReference>
<dbReference type="Gene3D" id="3.30.1130.10">
    <property type="match status" value="1"/>
</dbReference>
<dbReference type="HAMAP" id="MF_00818">
    <property type="entry name" value="QueF_type1"/>
    <property type="match status" value="1"/>
</dbReference>
<dbReference type="InterPro" id="IPR043133">
    <property type="entry name" value="GTP-CH-I_C/QueF"/>
</dbReference>
<dbReference type="InterPro" id="IPR050084">
    <property type="entry name" value="NADPH_dep_7-cyano-7-deazaG_red"/>
</dbReference>
<dbReference type="InterPro" id="IPR029500">
    <property type="entry name" value="QueF"/>
</dbReference>
<dbReference type="InterPro" id="IPR016856">
    <property type="entry name" value="QueF_type1"/>
</dbReference>
<dbReference type="NCBIfam" id="TIGR03139">
    <property type="entry name" value="QueF-II"/>
    <property type="match status" value="1"/>
</dbReference>
<dbReference type="PANTHER" id="PTHR34354">
    <property type="entry name" value="NADPH-DEPENDENT 7-CYANO-7-DEAZAGUANINE REDUCTASE"/>
    <property type="match status" value="1"/>
</dbReference>
<dbReference type="PANTHER" id="PTHR34354:SF1">
    <property type="entry name" value="NADPH-DEPENDENT 7-CYANO-7-DEAZAGUANINE REDUCTASE"/>
    <property type="match status" value="1"/>
</dbReference>
<dbReference type="Pfam" id="PF14489">
    <property type="entry name" value="QueF"/>
    <property type="match status" value="1"/>
</dbReference>
<dbReference type="PIRSF" id="PIRSF027377">
    <property type="entry name" value="Nitrile_oxidored_QueF"/>
    <property type="match status" value="1"/>
</dbReference>
<dbReference type="SUPFAM" id="SSF55620">
    <property type="entry name" value="Tetrahydrobiopterin biosynthesis enzymes-like"/>
    <property type="match status" value="1"/>
</dbReference>
<protein>
    <recommendedName>
        <fullName evidence="1">NADPH-dependent 7-cyano-7-deazaguanine reductase</fullName>
        <ecNumber evidence="1">1.7.1.13</ecNumber>
    </recommendedName>
    <alternativeName>
        <fullName evidence="1">7-cyano-7-carbaguanine reductase</fullName>
    </alternativeName>
    <alternativeName>
        <fullName evidence="1">NADPH-dependent nitrile oxidoreductase</fullName>
    </alternativeName>
    <alternativeName>
        <fullName evidence="1">PreQ(0) reductase</fullName>
    </alternativeName>
</protein>
<feature type="chain" id="PRO_1000062394" description="NADPH-dependent 7-cyano-7-deazaguanine reductase">
    <location>
        <begin position="1"/>
        <end position="139"/>
    </location>
</feature>
<feature type="active site" description="Thioimide intermediate" evidence="1">
    <location>
        <position position="34"/>
    </location>
</feature>
<feature type="active site" description="Proton donor" evidence="1">
    <location>
        <position position="41"/>
    </location>
</feature>
<feature type="binding site" evidence="1">
    <location>
        <begin position="56"/>
        <end position="58"/>
    </location>
    <ligand>
        <name>substrate</name>
    </ligand>
</feature>
<feature type="binding site" evidence="1">
    <location>
        <begin position="75"/>
        <end position="76"/>
    </location>
    <ligand>
        <name>substrate</name>
    </ligand>
</feature>
<sequence>MSSQPSKALETFDNPTPGRDFHIHMEIPEFTCLCPKTGQPDFAVLYLDYIPDQKCVELKSLKLYIWSFRDEGCFHEAVTNQILDDLVVATDPKFMRLTAKFYVRGGIFTNVVAEHRKPGWQPQPRVELAEFESQSNIRG</sequence>
<evidence type="ECO:0000255" key="1">
    <source>
        <dbReference type="HAMAP-Rule" id="MF_00818"/>
    </source>
</evidence>
<proteinExistence type="inferred from homology"/>
<reference key="1">
    <citation type="submission" date="2006-03" db="EMBL/GenBank/DDBJ databases">
        <title>Complete sequence of Methylobacillus flagellatus KT.</title>
        <authorList>
            <consortium name="US DOE Joint Genome Institute"/>
            <person name="Copeland A."/>
            <person name="Lucas S."/>
            <person name="Lapidus A."/>
            <person name="Barry K."/>
            <person name="Detter J.C."/>
            <person name="Glavina del Rio T."/>
            <person name="Hammon N."/>
            <person name="Israni S."/>
            <person name="Dalin E."/>
            <person name="Tice H."/>
            <person name="Pitluck S."/>
            <person name="Brettin T."/>
            <person name="Bruce D."/>
            <person name="Han C."/>
            <person name="Tapia R."/>
            <person name="Saunders E."/>
            <person name="Gilna P."/>
            <person name="Schmutz J."/>
            <person name="Larimer F."/>
            <person name="Land M."/>
            <person name="Kyrpides N."/>
            <person name="Anderson I."/>
            <person name="Richardson P."/>
        </authorList>
    </citation>
    <scope>NUCLEOTIDE SEQUENCE [LARGE SCALE GENOMIC DNA]</scope>
    <source>
        <strain>ATCC 51484 / DSM 6875 / VKM B-1610 / KT</strain>
    </source>
</reference>